<feature type="chain" id="PRO_0000329543" description="Polyribonucleotide nucleotidyltransferase">
    <location>
        <begin position="1"/>
        <end position="720"/>
    </location>
</feature>
<feature type="domain" description="KH" evidence="1">
    <location>
        <begin position="554"/>
        <end position="613"/>
    </location>
</feature>
<feature type="domain" description="S1 motif" evidence="1">
    <location>
        <begin position="623"/>
        <end position="691"/>
    </location>
</feature>
<feature type="region of interest" description="Disordered" evidence="2">
    <location>
        <begin position="692"/>
        <end position="720"/>
    </location>
</feature>
<feature type="compositionally biased region" description="Basic and acidic residues" evidence="2">
    <location>
        <begin position="701"/>
        <end position="720"/>
    </location>
</feature>
<feature type="binding site" evidence="1">
    <location>
        <position position="487"/>
    </location>
    <ligand>
        <name>Mg(2+)</name>
        <dbReference type="ChEBI" id="CHEBI:18420"/>
    </ligand>
</feature>
<feature type="binding site" evidence="1">
    <location>
        <position position="493"/>
    </location>
    <ligand>
        <name>Mg(2+)</name>
        <dbReference type="ChEBI" id="CHEBI:18420"/>
    </ligand>
</feature>
<sequence length="720" mass="78453">MFTKHSVEIDWGGRPLKLETGKIARQADGAVVATYGETVVLATVVAAKSPREGVDFLPLTVDYQEKAYAAGRIPGGYFKREGRPTEKETLVSRLIDRPIRPLFVDAWRNETQVIVTTLSHDMENDPDILAMVAASAALTLSGVPFKGPIGAARVGFANDEYILNPTLDEMTDTQLDLVVAGTSDAVLMVESEAKELNEDIMLGAVMFGHRHFQPVINAIIELAEKAAKEPRDVAIIDNSAIEKEMLGIAEQDLRKAYAIPVKQERYAAVAAVKEKVMAYFFPEGQEPKYEKLRVADVFKELEAKIVRWNILDTGRRIDGRDVKTVRNIVCEVGVLPRAHGSALFTRGETQALVVTTLGTGEDEQYIDALSGTYKETFLLHYNFPPYSVGETGRLGGTKRREIGHGKLAWRAIHPVLPPHHEFPYTTRVVSEVTESNGSSSMATVCGSSLALMDAGVPLKRPTAGIAMGLILEGSRYAVLSDILGDEDHLGDMDFKVAGTESGITSLQMDIKIEGITEEIMRVALGQAREGRIHILGEMSKALTAARAELGEYAPRIETFKIPTDKIREVIGTGGKVIREIVEKTGAKVNIEDDGTVKVASSDGEAMKAAIKWIKSIASDPEIGQIYDGTVVKVMEFGAFVNFFGTRDGLVHISQLADKRVQKTTDVVKEGDKVKVKLLGFDDRGKTRLSMKAVDQTTGEDLEAKQKAEGGAEAPREAAGE</sequence>
<keyword id="KW-0963">Cytoplasm</keyword>
<keyword id="KW-0460">Magnesium</keyword>
<keyword id="KW-0479">Metal-binding</keyword>
<keyword id="KW-0548">Nucleotidyltransferase</keyword>
<keyword id="KW-1185">Reference proteome</keyword>
<keyword id="KW-0694">RNA-binding</keyword>
<keyword id="KW-0808">Transferase</keyword>
<dbReference type="EC" id="2.7.7.8" evidence="1"/>
<dbReference type="EMBL" id="CP000494">
    <property type="protein sequence ID" value="ABQ32364.1"/>
    <property type="molecule type" value="Genomic_DNA"/>
</dbReference>
<dbReference type="RefSeq" id="WP_011942587.1">
    <property type="nucleotide sequence ID" value="NC_009485.1"/>
</dbReference>
<dbReference type="SMR" id="A5E870"/>
<dbReference type="STRING" id="288000.BBta_0062"/>
<dbReference type="KEGG" id="bbt:BBta_0062"/>
<dbReference type="eggNOG" id="COG1185">
    <property type="taxonomic scope" value="Bacteria"/>
</dbReference>
<dbReference type="HOGENOM" id="CLU_004217_2_2_5"/>
<dbReference type="OrthoDB" id="9804305at2"/>
<dbReference type="Proteomes" id="UP000000246">
    <property type="component" value="Chromosome"/>
</dbReference>
<dbReference type="GO" id="GO:0005829">
    <property type="term" value="C:cytosol"/>
    <property type="evidence" value="ECO:0007669"/>
    <property type="project" value="TreeGrafter"/>
</dbReference>
<dbReference type="GO" id="GO:0000175">
    <property type="term" value="F:3'-5'-RNA exonuclease activity"/>
    <property type="evidence" value="ECO:0007669"/>
    <property type="project" value="TreeGrafter"/>
</dbReference>
<dbReference type="GO" id="GO:0000287">
    <property type="term" value="F:magnesium ion binding"/>
    <property type="evidence" value="ECO:0007669"/>
    <property type="project" value="UniProtKB-UniRule"/>
</dbReference>
<dbReference type="GO" id="GO:0004654">
    <property type="term" value="F:polyribonucleotide nucleotidyltransferase activity"/>
    <property type="evidence" value="ECO:0007669"/>
    <property type="project" value="UniProtKB-UniRule"/>
</dbReference>
<dbReference type="GO" id="GO:0003723">
    <property type="term" value="F:RNA binding"/>
    <property type="evidence" value="ECO:0007669"/>
    <property type="project" value="UniProtKB-UniRule"/>
</dbReference>
<dbReference type="GO" id="GO:0006402">
    <property type="term" value="P:mRNA catabolic process"/>
    <property type="evidence" value="ECO:0007669"/>
    <property type="project" value="UniProtKB-UniRule"/>
</dbReference>
<dbReference type="GO" id="GO:0006396">
    <property type="term" value="P:RNA processing"/>
    <property type="evidence" value="ECO:0007669"/>
    <property type="project" value="InterPro"/>
</dbReference>
<dbReference type="CDD" id="cd02393">
    <property type="entry name" value="KH-I_PNPase"/>
    <property type="match status" value="1"/>
</dbReference>
<dbReference type="CDD" id="cd11363">
    <property type="entry name" value="RNase_PH_PNPase_1"/>
    <property type="match status" value="1"/>
</dbReference>
<dbReference type="CDD" id="cd11364">
    <property type="entry name" value="RNase_PH_PNPase_2"/>
    <property type="match status" value="1"/>
</dbReference>
<dbReference type="CDD" id="cd04472">
    <property type="entry name" value="S1_PNPase"/>
    <property type="match status" value="1"/>
</dbReference>
<dbReference type="FunFam" id="2.40.50.140:FF:000107">
    <property type="entry name" value="Polyribonucleotide nucleotidyltransferase"/>
    <property type="match status" value="1"/>
</dbReference>
<dbReference type="FunFam" id="3.30.1370.10:FF:000001">
    <property type="entry name" value="Polyribonucleotide nucleotidyltransferase"/>
    <property type="match status" value="1"/>
</dbReference>
<dbReference type="FunFam" id="3.30.230.70:FF:000001">
    <property type="entry name" value="Polyribonucleotide nucleotidyltransferase"/>
    <property type="match status" value="1"/>
</dbReference>
<dbReference type="FunFam" id="3.30.230.70:FF:000002">
    <property type="entry name" value="Polyribonucleotide nucleotidyltransferase"/>
    <property type="match status" value="1"/>
</dbReference>
<dbReference type="Gene3D" id="3.30.230.70">
    <property type="entry name" value="GHMP Kinase, N-terminal domain"/>
    <property type="match status" value="2"/>
</dbReference>
<dbReference type="Gene3D" id="3.30.1370.10">
    <property type="entry name" value="K Homology domain, type 1"/>
    <property type="match status" value="1"/>
</dbReference>
<dbReference type="Gene3D" id="2.40.50.140">
    <property type="entry name" value="Nucleic acid-binding proteins"/>
    <property type="match status" value="1"/>
</dbReference>
<dbReference type="HAMAP" id="MF_01595">
    <property type="entry name" value="PNPase"/>
    <property type="match status" value="1"/>
</dbReference>
<dbReference type="InterPro" id="IPR001247">
    <property type="entry name" value="ExoRNase_PH_dom1"/>
</dbReference>
<dbReference type="InterPro" id="IPR015847">
    <property type="entry name" value="ExoRNase_PH_dom2"/>
</dbReference>
<dbReference type="InterPro" id="IPR036345">
    <property type="entry name" value="ExoRNase_PH_dom2_sf"/>
</dbReference>
<dbReference type="InterPro" id="IPR004087">
    <property type="entry name" value="KH_dom"/>
</dbReference>
<dbReference type="InterPro" id="IPR004088">
    <property type="entry name" value="KH_dom_type_1"/>
</dbReference>
<dbReference type="InterPro" id="IPR036612">
    <property type="entry name" value="KH_dom_type_1_sf"/>
</dbReference>
<dbReference type="InterPro" id="IPR012340">
    <property type="entry name" value="NA-bd_OB-fold"/>
</dbReference>
<dbReference type="InterPro" id="IPR012162">
    <property type="entry name" value="PNPase"/>
</dbReference>
<dbReference type="InterPro" id="IPR027408">
    <property type="entry name" value="PNPase/RNase_PH_dom_sf"/>
</dbReference>
<dbReference type="InterPro" id="IPR015848">
    <property type="entry name" value="PNPase_PH_RNA-bd_bac/org-type"/>
</dbReference>
<dbReference type="InterPro" id="IPR036456">
    <property type="entry name" value="PNPase_PH_RNA-bd_sf"/>
</dbReference>
<dbReference type="InterPro" id="IPR020568">
    <property type="entry name" value="Ribosomal_Su5_D2-typ_SF"/>
</dbReference>
<dbReference type="InterPro" id="IPR003029">
    <property type="entry name" value="S1_domain"/>
</dbReference>
<dbReference type="NCBIfam" id="TIGR03591">
    <property type="entry name" value="polynuc_phos"/>
    <property type="match status" value="1"/>
</dbReference>
<dbReference type="NCBIfam" id="NF008805">
    <property type="entry name" value="PRK11824.1"/>
    <property type="match status" value="1"/>
</dbReference>
<dbReference type="PANTHER" id="PTHR11252">
    <property type="entry name" value="POLYRIBONUCLEOTIDE NUCLEOTIDYLTRANSFERASE"/>
    <property type="match status" value="1"/>
</dbReference>
<dbReference type="PANTHER" id="PTHR11252:SF0">
    <property type="entry name" value="POLYRIBONUCLEOTIDE NUCLEOTIDYLTRANSFERASE 1, MITOCHONDRIAL"/>
    <property type="match status" value="1"/>
</dbReference>
<dbReference type="Pfam" id="PF00013">
    <property type="entry name" value="KH_1"/>
    <property type="match status" value="1"/>
</dbReference>
<dbReference type="Pfam" id="PF03726">
    <property type="entry name" value="PNPase"/>
    <property type="match status" value="1"/>
</dbReference>
<dbReference type="Pfam" id="PF01138">
    <property type="entry name" value="RNase_PH"/>
    <property type="match status" value="2"/>
</dbReference>
<dbReference type="Pfam" id="PF03725">
    <property type="entry name" value="RNase_PH_C"/>
    <property type="match status" value="1"/>
</dbReference>
<dbReference type="Pfam" id="PF00575">
    <property type="entry name" value="S1"/>
    <property type="match status" value="1"/>
</dbReference>
<dbReference type="PIRSF" id="PIRSF005499">
    <property type="entry name" value="PNPase"/>
    <property type="match status" value="1"/>
</dbReference>
<dbReference type="SMART" id="SM00322">
    <property type="entry name" value="KH"/>
    <property type="match status" value="1"/>
</dbReference>
<dbReference type="SMART" id="SM00316">
    <property type="entry name" value="S1"/>
    <property type="match status" value="1"/>
</dbReference>
<dbReference type="SUPFAM" id="SSF54791">
    <property type="entry name" value="Eukaryotic type KH-domain (KH-domain type I)"/>
    <property type="match status" value="1"/>
</dbReference>
<dbReference type="SUPFAM" id="SSF50249">
    <property type="entry name" value="Nucleic acid-binding proteins"/>
    <property type="match status" value="1"/>
</dbReference>
<dbReference type="SUPFAM" id="SSF46915">
    <property type="entry name" value="Polynucleotide phosphorylase/guanosine pentaphosphate synthase (PNPase/GPSI), domain 3"/>
    <property type="match status" value="1"/>
</dbReference>
<dbReference type="SUPFAM" id="SSF55666">
    <property type="entry name" value="Ribonuclease PH domain 2-like"/>
    <property type="match status" value="2"/>
</dbReference>
<dbReference type="SUPFAM" id="SSF54211">
    <property type="entry name" value="Ribosomal protein S5 domain 2-like"/>
    <property type="match status" value="2"/>
</dbReference>
<dbReference type="PROSITE" id="PS50084">
    <property type="entry name" value="KH_TYPE_1"/>
    <property type="match status" value="1"/>
</dbReference>
<dbReference type="PROSITE" id="PS50126">
    <property type="entry name" value="S1"/>
    <property type="match status" value="1"/>
</dbReference>
<gene>
    <name evidence="1" type="primary">pnp</name>
    <name type="ordered locus">BBta_0062</name>
</gene>
<name>PNP_BRASB</name>
<accession>A5E870</accession>
<organism>
    <name type="scientific">Bradyrhizobium sp. (strain BTAi1 / ATCC BAA-1182)</name>
    <dbReference type="NCBI Taxonomy" id="288000"/>
    <lineage>
        <taxon>Bacteria</taxon>
        <taxon>Pseudomonadati</taxon>
        <taxon>Pseudomonadota</taxon>
        <taxon>Alphaproteobacteria</taxon>
        <taxon>Hyphomicrobiales</taxon>
        <taxon>Nitrobacteraceae</taxon>
        <taxon>Bradyrhizobium</taxon>
    </lineage>
</organism>
<proteinExistence type="inferred from homology"/>
<protein>
    <recommendedName>
        <fullName evidence="1">Polyribonucleotide nucleotidyltransferase</fullName>
        <ecNumber evidence="1">2.7.7.8</ecNumber>
    </recommendedName>
    <alternativeName>
        <fullName evidence="1">Polynucleotide phosphorylase</fullName>
        <shortName evidence="1">PNPase</shortName>
    </alternativeName>
</protein>
<evidence type="ECO:0000255" key="1">
    <source>
        <dbReference type="HAMAP-Rule" id="MF_01595"/>
    </source>
</evidence>
<evidence type="ECO:0000256" key="2">
    <source>
        <dbReference type="SAM" id="MobiDB-lite"/>
    </source>
</evidence>
<reference key="1">
    <citation type="journal article" date="2007" name="Science">
        <title>Legumes symbioses: absence of nod genes in photosynthetic bradyrhizobia.</title>
        <authorList>
            <person name="Giraud E."/>
            <person name="Moulin L."/>
            <person name="Vallenet D."/>
            <person name="Barbe V."/>
            <person name="Cytryn E."/>
            <person name="Avarre J.-C."/>
            <person name="Jaubert M."/>
            <person name="Simon D."/>
            <person name="Cartieaux F."/>
            <person name="Prin Y."/>
            <person name="Bena G."/>
            <person name="Hannibal L."/>
            <person name="Fardoux J."/>
            <person name="Kojadinovic M."/>
            <person name="Vuillet L."/>
            <person name="Lajus A."/>
            <person name="Cruveiller S."/>
            <person name="Rouy Z."/>
            <person name="Mangenot S."/>
            <person name="Segurens B."/>
            <person name="Dossat C."/>
            <person name="Franck W.L."/>
            <person name="Chang W.-S."/>
            <person name="Saunders E."/>
            <person name="Bruce D."/>
            <person name="Richardson P."/>
            <person name="Normand P."/>
            <person name="Dreyfus B."/>
            <person name="Pignol D."/>
            <person name="Stacey G."/>
            <person name="Emerich D."/>
            <person name="Vermeglio A."/>
            <person name="Medigue C."/>
            <person name="Sadowsky M."/>
        </authorList>
    </citation>
    <scope>NUCLEOTIDE SEQUENCE [LARGE SCALE GENOMIC DNA]</scope>
    <source>
        <strain>BTAi1 / ATCC BAA-1182</strain>
    </source>
</reference>
<comment type="function">
    <text evidence="1">Involved in mRNA degradation. Catalyzes the phosphorolysis of single-stranded polyribonucleotides processively in the 3'- to 5'-direction.</text>
</comment>
<comment type="catalytic activity">
    <reaction evidence="1">
        <text>RNA(n+1) + phosphate = RNA(n) + a ribonucleoside 5'-diphosphate</text>
        <dbReference type="Rhea" id="RHEA:22096"/>
        <dbReference type="Rhea" id="RHEA-COMP:14527"/>
        <dbReference type="Rhea" id="RHEA-COMP:17342"/>
        <dbReference type="ChEBI" id="CHEBI:43474"/>
        <dbReference type="ChEBI" id="CHEBI:57930"/>
        <dbReference type="ChEBI" id="CHEBI:140395"/>
        <dbReference type="EC" id="2.7.7.8"/>
    </reaction>
</comment>
<comment type="cofactor">
    <cofactor evidence="1">
        <name>Mg(2+)</name>
        <dbReference type="ChEBI" id="CHEBI:18420"/>
    </cofactor>
</comment>
<comment type="subcellular location">
    <subcellularLocation>
        <location evidence="1">Cytoplasm</location>
    </subcellularLocation>
</comment>
<comment type="similarity">
    <text evidence="1">Belongs to the polyribonucleotide nucleotidyltransferase family.</text>
</comment>